<protein>
    <recommendedName>
        <fullName>Centrosomal protein of 83 kDa</fullName>
        <shortName>Cep83</shortName>
    </recommendedName>
    <alternativeName>
        <fullName>Coiled-coil domain-containing protein 41</fullName>
    </alternativeName>
</protein>
<sequence>MDTFPSLFPPGGDSRLNPEPEFQNMLIDERVRCEHHKHNYQALKIEHKRLQEEYVKSQNELKRVLIEKQASQEKFQLLLEDLRGELVEKARDIEKMKLQVLTPQKLELVKAQLQQELEAPMRERFRTLDEEVERYRAEYNKLRYEYTFLKSEFEHQKEEFTRVSEEEKMKYKSEVARLEKDKEELHNQLLSVDPTRDSKRMEQLVREKTHLLQKLKSLEAEVAELRAEKENSGAQVENVQRIQVRQLAEMQATLRSLEAEKQSAKLQAERLEKELQSSNEQNTCLISKLHRADREISTLASEVKELKHANKLEITDIKLEAARAKSELERERNKIQSELDGLQSDNEILKSTVEHHKALLVEKDRELIRKVQAAKEEGYQKLMVLQDEKLELENRLSDLEKMKVERDVWRQSEKEQCEEKLRASQMAEEAARRELQSTRLKLQQQIVNTEKAEKEKLENSELKQQISHLQIQVTSLTQSENDLLNSNHMLKDMVERLKQECRNLRSQAEKAQLDVEKTLEEKQIQWLEEKHKLHERITDREEKYNQAKEKLQRAATAQKKRKSLHENKLKRLQEKVEVLEAKKEELETENQVLNRQNVPFEEYTRLQKRLKDIQRRHNEFRSLILVPNMPPTASISPANFQSAVTVPGAELSFPPHLQEEQHQRELSLLRKRLEELETTQRKQLEELGSPGE</sequence>
<name>CEP83_MOUSE</name>
<feature type="chain" id="PRO_0000234496" description="Centrosomal protein of 83 kDa">
    <location>
        <begin position="1"/>
        <end position="692"/>
    </location>
</feature>
<feature type="coiled-coil region" evidence="2">
    <location>
        <begin position="32"/>
        <end position="625"/>
    </location>
</feature>
<feature type="coiled-coil region" evidence="2">
    <location>
        <begin position="656"/>
        <end position="689"/>
    </location>
</feature>
<feature type="modified residue" description="Phosphoserine" evidence="6">
    <location>
        <position position="689"/>
    </location>
</feature>
<feature type="splice variant" id="VSP_018333" description="In isoform 2." evidence="4">
    <location>
        <begin position="1"/>
        <end position="382"/>
    </location>
</feature>
<feature type="sequence conflict" description="In Ref. 2; AAH43468." evidence="5" ref="2">
    <original>P</original>
    <variation>S</variation>
    <location>
        <position position="690"/>
    </location>
</feature>
<reference key="1">
    <citation type="journal article" date="2005" name="Science">
        <title>The transcriptional landscape of the mammalian genome.</title>
        <authorList>
            <person name="Carninci P."/>
            <person name="Kasukawa T."/>
            <person name="Katayama S."/>
            <person name="Gough J."/>
            <person name="Frith M.C."/>
            <person name="Maeda N."/>
            <person name="Oyama R."/>
            <person name="Ravasi T."/>
            <person name="Lenhard B."/>
            <person name="Wells C."/>
            <person name="Kodzius R."/>
            <person name="Shimokawa K."/>
            <person name="Bajic V.B."/>
            <person name="Brenner S.E."/>
            <person name="Batalov S."/>
            <person name="Forrest A.R."/>
            <person name="Zavolan M."/>
            <person name="Davis M.J."/>
            <person name="Wilming L.G."/>
            <person name="Aidinis V."/>
            <person name="Allen J.E."/>
            <person name="Ambesi-Impiombato A."/>
            <person name="Apweiler R."/>
            <person name="Aturaliya R.N."/>
            <person name="Bailey T.L."/>
            <person name="Bansal M."/>
            <person name="Baxter L."/>
            <person name="Beisel K.W."/>
            <person name="Bersano T."/>
            <person name="Bono H."/>
            <person name="Chalk A.M."/>
            <person name="Chiu K.P."/>
            <person name="Choudhary V."/>
            <person name="Christoffels A."/>
            <person name="Clutterbuck D.R."/>
            <person name="Crowe M.L."/>
            <person name="Dalla E."/>
            <person name="Dalrymple B.P."/>
            <person name="de Bono B."/>
            <person name="Della Gatta G."/>
            <person name="di Bernardo D."/>
            <person name="Down T."/>
            <person name="Engstrom P."/>
            <person name="Fagiolini M."/>
            <person name="Faulkner G."/>
            <person name="Fletcher C.F."/>
            <person name="Fukushima T."/>
            <person name="Furuno M."/>
            <person name="Futaki S."/>
            <person name="Gariboldi M."/>
            <person name="Georgii-Hemming P."/>
            <person name="Gingeras T.R."/>
            <person name="Gojobori T."/>
            <person name="Green R.E."/>
            <person name="Gustincich S."/>
            <person name="Harbers M."/>
            <person name="Hayashi Y."/>
            <person name="Hensch T.K."/>
            <person name="Hirokawa N."/>
            <person name="Hill D."/>
            <person name="Huminiecki L."/>
            <person name="Iacono M."/>
            <person name="Ikeo K."/>
            <person name="Iwama A."/>
            <person name="Ishikawa T."/>
            <person name="Jakt M."/>
            <person name="Kanapin A."/>
            <person name="Katoh M."/>
            <person name="Kawasawa Y."/>
            <person name="Kelso J."/>
            <person name="Kitamura H."/>
            <person name="Kitano H."/>
            <person name="Kollias G."/>
            <person name="Krishnan S.P."/>
            <person name="Kruger A."/>
            <person name="Kummerfeld S.K."/>
            <person name="Kurochkin I.V."/>
            <person name="Lareau L.F."/>
            <person name="Lazarevic D."/>
            <person name="Lipovich L."/>
            <person name="Liu J."/>
            <person name="Liuni S."/>
            <person name="McWilliam S."/>
            <person name="Madan Babu M."/>
            <person name="Madera M."/>
            <person name="Marchionni L."/>
            <person name="Matsuda H."/>
            <person name="Matsuzawa S."/>
            <person name="Miki H."/>
            <person name="Mignone F."/>
            <person name="Miyake S."/>
            <person name="Morris K."/>
            <person name="Mottagui-Tabar S."/>
            <person name="Mulder N."/>
            <person name="Nakano N."/>
            <person name="Nakauchi H."/>
            <person name="Ng P."/>
            <person name="Nilsson R."/>
            <person name="Nishiguchi S."/>
            <person name="Nishikawa S."/>
            <person name="Nori F."/>
            <person name="Ohara O."/>
            <person name="Okazaki Y."/>
            <person name="Orlando V."/>
            <person name="Pang K.C."/>
            <person name="Pavan W.J."/>
            <person name="Pavesi G."/>
            <person name="Pesole G."/>
            <person name="Petrovsky N."/>
            <person name="Piazza S."/>
            <person name="Reed J."/>
            <person name="Reid J.F."/>
            <person name="Ring B.Z."/>
            <person name="Ringwald M."/>
            <person name="Rost B."/>
            <person name="Ruan Y."/>
            <person name="Salzberg S.L."/>
            <person name="Sandelin A."/>
            <person name="Schneider C."/>
            <person name="Schoenbach C."/>
            <person name="Sekiguchi K."/>
            <person name="Semple C.A."/>
            <person name="Seno S."/>
            <person name="Sessa L."/>
            <person name="Sheng Y."/>
            <person name="Shibata Y."/>
            <person name="Shimada H."/>
            <person name="Shimada K."/>
            <person name="Silva D."/>
            <person name="Sinclair B."/>
            <person name="Sperling S."/>
            <person name="Stupka E."/>
            <person name="Sugiura K."/>
            <person name="Sultana R."/>
            <person name="Takenaka Y."/>
            <person name="Taki K."/>
            <person name="Tammoja K."/>
            <person name="Tan S.L."/>
            <person name="Tang S."/>
            <person name="Taylor M.S."/>
            <person name="Tegner J."/>
            <person name="Teichmann S.A."/>
            <person name="Ueda H.R."/>
            <person name="van Nimwegen E."/>
            <person name="Verardo R."/>
            <person name="Wei C.L."/>
            <person name="Yagi K."/>
            <person name="Yamanishi H."/>
            <person name="Zabarovsky E."/>
            <person name="Zhu S."/>
            <person name="Zimmer A."/>
            <person name="Hide W."/>
            <person name="Bult C."/>
            <person name="Grimmond S.M."/>
            <person name="Teasdale R.D."/>
            <person name="Liu E.T."/>
            <person name="Brusic V."/>
            <person name="Quackenbush J."/>
            <person name="Wahlestedt C."/>
            <person name="Mattick J.S."/>
            <person name="Hume D.A."/>
            <person name="Kai C."/>
            <person name="Sasaki D."/>
            <person name="Tomaru Y."/>
            <person name="Fukuda S."/>
            <person name="Kanamori-Katayama M."/>
            <person name="Suzuki M."/>
            <person name="Aoki J."/>
            <person name="Arakawa T."/>
            <person name="Iida J."/>
            <person name="Imamura K."/>
            <person name="Itoh M."/>
            <person name="Kato T."/>
            <person name="Kawaji H."/>
            <person name="Kawagashira N."/>
            <person name="Kawashima T."/>
            <person name="Kojima M."/>
            <person name="Kondo S."/>
            <person name="Konno H."/>
            <person name="Nakano K."/>
            <person name="Ninomiya N."/>
            <person name="Nishio T."/>
            <person name="Okada M."/>
            <person name="Plessy C."/>
            <person name="Shibata K."/>
            <person name="Shiraki T."/>
            <person name="Suzuki S."/>
            <person name="Tagami M."/>
            <person name="Waki K."/>
            <person name="Watahiki A."/>
            <person name="Okamura-Oho Y."/>
            <person name="Suzuki H."/>
            <person name="Kawai J."/>
            <person name="Hayashizaki Y."/>
        </authorList>
    </citation>
    <scope>NUCLEOTIDE SEQUENCE [LARGE SCALE MRNA] (ISOFORMS 1 AND 2)</scope>
    <source>
        <strain>C57BL/6J</strain>
        <tissue>Bone marrow</tissue>
        <tissue>Testis</tissue>
    </source>
</reference>
<reference key="2">
    <citation type="journal article" date="2004" name="Genome Res.">
        <title>The status, quality, and expansion of the NIH full-length cDNA project: the Mammalian Gene Collection (MGC).</title>
        <authorList>
            <consortium name="The MGC Project Team"/>
        </authorList>
    </citation>
    <scope>NUCLEOTIDE SEQUENCE [LARGE SCALE MRNA] (ISOFORM 1)</scope>
    <source>
        <strain>C57BL/6J</strain>
        <strain>Czech II</strain>
        <tissue>Eye</tissue>
        <tissue>Mammary gland</tissue>
    </source>
</reference>
<reference key="3">
    <citation type="journal article" date="2010" name="Cell">
        <title>A tissue-specific atlas of mouse protein phosphorylation and expression.</title>
        <authorList>
            <person name="Huttlin E.L."/>
            <person name="Jedrychowski M.P."/>
            <person name="Elias J.E."/>
            <person name="Goswami T."/>
            <person name="Rad R."/>
            <person name="Beausoleil S.A."/>
            <person name="Villen J."/>
            <person name="Haas W."/>
            <person name="Sowa M.E."/>
            <person name="Gygi S.P."/>
        </authorList>
    </citation>
    <scope>PHOSPHORYLATION [LARGE SCALE ANALYSIS] AT SER-689</scope>
    <scope>IDENTIFICATION BY MASS SPECTROMETRY [LARGE SCALE ANALYSIS]</scope>
    <source>
        <tissue>Pancreas</tissue>
    </source>
</reference>
<reference key="4">
    <citation type="journal article" date="2013" name="Genes Dev.">
        <title>Centriole distal appendages promote membrane docking, leading to cilia initiation.</title>
        <authorList>
            <person name="Tanos B.E."/>
            <person name="Yang H.J."/>
            <person name="Soni R."/>
            <person name="Wang W.J."/>
            <person name="Macaluso F.P."/>
            <person name="Asara J.M."/>
            <person name="Tsou M.F."/>
        </authorList>
    </citation>
    <scope>FUNCTION</scope>
</reference>
<proteinExistence type="evidence at protein level"/>
<keyword id="KW-0025">Alternative splicing</keyword>
<keyword id="KW-0970">Cilium biogenesis/degradation</keyword>
<keyword id="KW-0175">Coiled coil</keyword>
<keyword id="KW-0963">Cytoplasm</keyword>
<keyword id="KW-0206">Cytoskeleton</keyword>
<keyword id="KW-0597">Phosphoprotein</keyword>
<keyword id="KW-1185">Reference proteome</keyword>
<gene>
    <name type="primary">Cep83</name>
    <name type="synonym">Ccdc41</name>
</gene>
<organism>
    <name type="scientific">Mus musculus</name>
    <name type="common">Mouse</name>
    <dbReference type="NCBI Taxonomy" id="10090"/>
    <lineage>
        <taxon>Eukaryota</taxon>
        <taxon>Metazoa</taxon>
        <taxon>Chordata</taxon>
        <taxon>Craniata</taxon>
        <taxon>Vertebrata</taxon>
        <taxon>Euteleostomi</taxon>
        <taxon>Mammalia</taxon>
        <taxon>Eutheria</taxon>
        <taxon>Euarchontoglires</taxon>
        <taxon>Glires</taxon>
        <taxon>Rodentia</taxon>
        <taxon>Myomorpha</taxon>
        <taxon>Muroidea</taxon>
        <taxon>Muridae</taxon>
        <taxon>Murinae</taxon>
        <taxon>Mus</taxon>
        <taxon>Mus</taxon>
    </lineage>
</organism>
<accession>Q9D5R3</accession>
<accession>Q3U7X7</accession>
<accession>Q3UX57</accession>
<accession>Q80VF0</accession>
<comment type="function">
    <text evidence="3">Component of the distal appendage region of the centriole involved in the initiation of primary cilium assembly. May collaborate with IFT20 in the trafficking of ciliary membrane proteins from the Golgi complex to the cilium during the initiation of primary cilium assembly.</text>
</comment>
<comment type="subunit">
    <text evidence="1">Interacts with CEP164 and IFT20.</text>
</comment>
<comment type="subcellular location">
    <subcellularLocation>
        <location evidence="1">Cytoplasm</location>
        <location evidence="1">Cytoskeleton</location>
        <location evidence="1">Microtubule organizing center</location>
        <location evidence="1">Centrosome</location>
        <location evidence="1">Centriole</location>
    </subcellularLocation>
    <text evidence="1">Localizes specifically to the distal appendage region of the centriole, which anchors the mother centriole to the plasma membrane. Localizes to centrioles at all stages of the cell cycle, including mitosis.</text>
</comment>
<comment type="alternative products">
    <event type="alternative splicing"/>
    <isoform>
        <id>Q9D5R3-1</id>
        <name>1</name>
        <sequence type="displayed"/>
    </isoform>
    <isoform>
        <id>Q9D5R3-2</id>
        <name>2</name>
        <sequence type="described" ref="VSP_018333"/>
    </isoform>
</comment>
<comment type="similarity">
    <text evidence="5">Belongs to the CEP83 family.</text>
</comment>
<evidence type="ECO:0000250" key="1">
    <source>
        <dbReference type="UniProtKB" id="Q9Y592"/>
    </source>
</evidence>
<evidence type="ECO:0000255" key="2"/>
<evidence type="ECO:0000269" key="3">
    <source>
    </source>
</evidence>
<evidence type="ECO:0000303" key="4">
    <source>
    </source>
</evidence>
<evidence type="ECO:0000305" key="5"/>
<evidence type="ECO:0007744" key="6">
    <source>
    </source>
</evidence>
<dbReference type="EMBL" id="AK015007">
    <property type="protein sequence ID" value="BAB29669.2"/>
    <property type="molecule type" value="mRNA"/>
</dbReference>
<dbReference type="EMBL" id="AK135868">
    <property type="protein sequence ID" value="BAE22706.1"/>
    <property type="molecule type" value="mRNA"/>
</dbReference>
<dbReference type="EMBL" id="AK152465">
    <property type="protein sequence ID" value="BAE31242.1"/>
    <property type="molecule type" value="mRNA"/>
</dbReference>
<dbReference type="EMBL" id="AK152801">
    <property type="protein sequence ID" value="BAE31506.1"/>
    <property type="molecule type" value="mRNA"/>
</dbReference>
<dbReference type="EMBL" id="AK153515">
    <property type="protein sequence ID" value="BAE32058.1"/>
    <property type="molecule type" value="mRNA"/>
</dbReference>
<dbReference type="EMBL" id="AK151291">
    <property type="protein sequence ID" value="BAE30276.1"/>
    <property type="molecule type" value="mRNA"/>
</dbReference>
<dbReference type="EMBL" id="BC043468">
    <property type="protein sequence ID" value="AAH43468.1"/>
    <property type="molecule type" value="mRNA"/>
</dbReference>
<dbReference type="EMBL" id="BC070464">
    <property type="protein sequence ID" value="AAH70464.1"/>
    <property type="molecule type" value="mRNA"/>
</dbReference>
<dbReference type="CCDS" id="CCDS36041.1">
    <molecule id="Q9D5R3-1"/>
</dbReference>
<dbReference type="RefSeq" id="NP_084128.2">
    <molecule id="Q9D5R3-1"/>
    <property type="nucleotide sequence ID" value="NM_029852.2"/>
</dbReference>
<dbReference type="SMR" id="Q9D5R3"/>
<dbReference type="FunCoup" id="Q9D5R3">
    <property type="interactions" value="1003"/>
</dbReference>
<dbReference type="STRING" id="10090.ENSMUSP00000020212"/>
<dbReference type="iPTMnet" id="Q9D5R3"/>
<dbReference type="PhosphoSitePlus" id="Q9D5R3"/>
<dbReference type="PaxDb" id="10090-ENSMUSP00000020212"/>
<dbReference type="ProteomicsDB" id="280004">
    <molecule id="Q9D5R3-1"/>
</dbReference>
<dbReference type="ProteomicsDB" id="280005">
    <molecule id="Q9D5R3-2"/>
</dbReference>
<dbReference type="Antibodypedia" id="52583">
    <property type="antibodies" value="97 antibodies from 20 providers"/>
</dbReference>
<dbReference type="Ensembl" id="ENSMUST00000020212.6">
    <molecule id="Q9D5R3-1"/>
    <property type="protein sequence ID" value="ENSMUSP00000020212.5"/>
    <property type="gene ID" value="ENSMUSG00000020024.8"/>
</dbReference>
<dbReference type="GeneID" id="77048"/>
<dbReference type="KEGG" id="mmu:77048"/>
<dbReference type="UCSC" id="uc007gvx.1">
    <molecule id="Q9D5R3-1"/>
    <property type="organism name" value="mouse"/>
</dbReference>
<dbReference type="UCSC" id="uc007gvy.1">
    <molecule id="Q9D5R3-2"/>
    <property type="organism name" value="mouse"/>
</dbReference>
<dbReference type="AGR" id="MGI:1924298"/>
<dbReference type="CTD" id="51134"/>
<dbReference type="MGI" id="MGI:1924298">
    <property type="gene designation" value="Cep83"/>
</dbReference>
<dbReference type="VEuPathDB" id="HostDB:ENSMUSG00000020024"/>
<dbReference type="eggNOG" id="ENOG502QWE2">
    <property type="taxonomic scope" value="Eukaryota"/>
</dbReference>
<dbReference type="GeneTree" id="ENSGT00940000154003"/>
<dbReference type="HOGENOM" id="CLU_020145_1_0_1"/>
<dbReference type="InParanoid" id="Q9D5R3"/>
<dbReference type="OMA" id="DAYKRKC"/>
<dbReference type="OrthoDB" id="311279at2759"/>
<dbReference type="PhylomeDB" id="Q9D5R3"/>
<dbReference type="TreeFam" id="TF329199"/>
<dbReference type="Reactome" id="R-MMU-5620912">
    <property type="pathway name" value="Anchoring of the basal body to the plasma membrane"/>
</dbReference>
<dbReference type="BioGRID-ORCS" id="77048">
    <property type="hits" value="4 hits in 76 CRISPR screens"/>
</dbReference>
<dbReference type="ChiTaRS" id="Cep83">
    <property type="organism name" value="mouse"/>
</dbReference>
<dbReference type="PRO" id="PR:Q9D5R3"/>
<dbReference type="Proteomes" id="UP000000589">
    <property type="component" value="Chromosome 10"/>
</dbReference>
<dbReference type="RNAct" id="Q9D5R3">
    <property type="molecule type" value="protein"/>
</dbReference>
<dbReference type="Bgee" id="ENSMUSG00000020024">
    <property type="expression patterns" value="Expressed in spermatid and 258 other cell types or tissues"/>
</dbReference>
<dbReference type="GO" id="GO:0005814">
    <property type="term" value="C:centriole"/>
    <property type="evidence" value="ECO:0000314"/>
    <property type="project" value="MGI"/>
</dbReference>
<dbReference type="GO" id="GO:0097539">
    <property type="term" value="C:ciliary transition fiber"/>
    <property type="evidence" value="ECO:0000266"/>
    <property type="project" value="MGI"/>
</dbReference>
<dbReference type="GO" id="GO:0005794">
    <property type="term" value="C:Golgi apparatus"/>
    <property type="evidence" value="ECO:0000266"/>
    <property type="project" value="MGI"/>
</dbReference>
<dbReference type="GO" id="GO:0060271">
    <property type="term" value="P:cilium assembly"/>
    <property type="evidence" value="ECO:0000315"/>
    <property type="project" value="MGI"/>
</dbReference>
<dbReference type="GO" id="GO:0051660">
    <property type="term" value="P:establishment of centrosome localization"/>
    <property type="evidence" value="ECO:0000315"/>
    <property type="project" value="MGI"/>
</dbReference>
<dbReference type="GO" id="GO:0071539">
    <property type="term" value="P:protein localization to centrosome"/>
    <property type="evidence" value="ECO:0000266"/>
    <property type="project" value="MGI"/>
</dbReference>
<dbReference type="GO" id="GO:0048278">
    <property type="term" value="P:vesicle docking"/>
    <property type="evidence" value="ECO:0007669"/>
    <property type="project" value="Ensembl"/>
</dbReference>
<dbReference type="InterPro" id="IPR052116">
    <property type="entry name" value="Centro_Cilium_Assembly"/>
</dbReference>
<dbReference type="PANTHER" id="PTHR23170:SF2">
    <property type="entry name" value="CENTROSOMAL PROTEIN OF 83 KDA"/>
    <property type="match status" value="1"/>
</dbReference>
<dbReference type="PANTHER" id="PTHR23170">
    <property type="entry name" value="NY-REN-58 ANTIGEN"/>
    <property type="match status" value="1"/>
</dbReference>